<name>METXA_DESPS</name>
<accession>Q6ANV2</accession>
<protein>
    <recommendedName>
        <fullName evidence="1">Homoserine O-acetyltransferase</fullName>
        <shortName evidence="1">HAT</shortName>
        <ecNumber evidence="1">2.3.1.31</ecNumber>
    </recommendedName>
    <alternativeName>
        <fullName evidence="1">Homoserine transacetylase</fullName>
        <shortName evidence="1">HTA</shortName>
    </alternativeName>
</protein>
<gene>
    <name evidence="1" type="primary">metXA</name>
    <name type="ordered locus">DP1243</name>
</gene>
<dbReference type="EC" id="2.3.1.31" evidence="1"/>
<dbReference type="EMBL" id="CR522870">
    <property type="protein sequence ID" value="CAG35972.1"/>
    <property type="status" value="ALT_INIT"/>
    <property type="molecule type" value="Genomic_DNA"/>
</dbReference>
<dbReference type="RefSeq" id="WP_041277703.1">
    <property type="nucleotide sequence ID" value="NC_006138.1"/>
</dbReference>
<dbReference type="SMR" id="Q6ANV2"/>
<dbReference type="STRING" id="177439.DP1243"/>
<dbReference type="ESTHER" id="desps-q6anv2">
    <property type="family name" value="Homoserine_transacetylase"/>
</dbReference>
<dbReference type="MEROPS" id="S33.A02"/>
<dbReference type="KEGG" id="dps:DP1243"/>
<dbReference type="eggNOG" id="COG2021">
    <property type="taxonomic scope" value="Bacteria"/>
</dbReference>
<dbReference type="HOGENOM" id="CLU_028760_1_2_7"/>
<dbReference type="OrthoDB" id="9800754at2"/>
<dbReference type="UniPathway" id="UPA00051">
    <property type="reaction ID" value="UER00074"/>
</dbReference>
<dbReference type="Proteomes" id="UP000000602">
    <property type="component" value="Chromosome"/>
</dbReference>
<dbReference type="GO" id="GO:0005737">
    <property type="term" value="C:cytoplasm"/>
    <property type="evidence" value="ECO:0007669"/>
    <property type="project" value="UniProtKB-SubCell"/>
</dbReference>
<dbReference type="GO" id="GO:0004414">
    <property type="term" value="F:homoserine O-acetyltransferase activity"/>
    <property type="evidence" value="ECO:0007669"/>
    <property type="project" value="UniProtKB-UniRule"/>
</dbReference>
<dbReference type="GO" id="GO:0009092">
    <property type="term" value="P:homoserine metabolic process"/>
    <property type="evidence" value="ECO:0007669"/>
    <property type="project" value="TreeGrafter"/>
</dbReference>
<dbReference type="GO" id="GO:0009086">
    <property type="term" value="P:methionine biosynthetic process"/>
    <property type="evidence" value="ECO:0007669"/>
    <property type="project" value="UniProtKB-UniRule"/>
</dbReference>
<dbReference type="FunFam" id="1.10.1740.110:FF:000001">
    <property type="entry name" value="Homoserine O-acetyltransferase"/>
    <property type="match status" value="1"/>
</dbReference>
<dbReference type="Gene3D" id="1.10.1740.110">
    <property type="match status" value="1"/>
</dbReference>
<dbReference type="Gene3D" id="3.40.50.1820">
    <property type="entry name" value="alpha/beta hydrolase"/>
    <property type="match status" value="1"/>
</dbReference>
<dbReference type="HAMAP" id="MF_00296">
    <property type="entry name" value="MetX_acyltransf"/>
    <property type="match status" value="1"/>
</dbReference>
<dbReference type="InterPro" id="IPR000073">
    <property type="entry name" value="AB_hydrolase_1"/>
</dbReference>
<dbReference type="InterPro" id="IPR029058">
    <property type="entry name" value="AB_hydrolase_fold"/>
</dbReference>
<dbReference type="InterPro" id="IPR008220">
    <property type="entry name" value="HAT_MetX-like"/>
</dbReference>
<dbReference type="NCBIfam" id="TIGR01392">
    <property type="entry name" value="homoserO_Ac_trn"/>
    <property type="match status" value="1"/>
</dbReference>
<dbReference type="NCBIfam" id="NF001209">
    <property type="entry name" value="PRK00175.1"/>
    <property type="match status" value="1"/>
</dbReference>
<dbReference type="PANTHER" id="PTHR32268">
    <property type="entry name" value="HOMOSERINE O-ACETYLTRANSFERASE"/>
    <property type="match status" value="1"/>
</dbReference>
<dbReference type="PANTHER" id="PTHR32268:SF11">
    <property type="entry name" value="HOMOSERINE O-ACETYLTRANSFERASE"/>
    <property type="match status" value="1"/>
</dbReference>
<dbReference type="Pfam" id="PF00561">
    <property type="entry name" value="Abhydrolase_1"/>
    <property type="match status" value="1"/>
</dbReference>
<dbReference type="PIRSF" id="PIRSF000443">
    <property type="entry name" value="Homoser_Ac_trans"/>
    <property type="match status" value="1"/>
</dbReference>
<dbReference type="SUPFAM" id="SSF53474">
    <property type="entry name" value="alpha/beta-Hydrolases"/>
    <property type="match status" value="1"/>
</dbReference>
<keyword id="KW-0012">Acyltransferase</keyword>
<keyword id="KW-0028">Amino-acid biosynthesis</keyword>
<keyword id="KW-0963">Cytoplasm</keyword>
<keyword id="KW-0486">Methionine biosynthesis</keyword>
<keyword id="KW-1185">Reference proteome</keyword>
<keyword id="KW-0808">Transferase</keyword>
<comment type="function">
    <text evidence="1">Transfers an acetyl group from acetyl-CoA to L-homoserine, forming acetyl-L-homoserine.</text>
</comment>
<comment type="catalytic activity">
    <reaction evidence="1">
        <text>L-homoserine + acetyl-CoA = O-acetyl-L-homoserine + CoA</text>
        <dbReference type="Rhea" id="RHEA:13701"/>
        <dbReference type="ChEBI" id="CHEBI:57287"/>
        <dbReference type="ChEBI" id="CHEBI:57288"/>
        <dbReference type="ChEBI" id="CHEBI:57476"/>
        <dbReference type="ChEBI" id="CHEBI:57716"/>
        <dbReference type="EC" id="2.3.1.31"/>
    </reaction>
</comment>
<comment type="pathway">
    <text evidence="1">Amino-acid biosynthesis; L-methionine biosynthesis via de novo pathway; O-acetyl-L-homoserine from L-homoserine: step 1/1.</text>
</comment>
<comment type="subunit">
    <text evidence="1">Homodimer.</text>
</comment>
<comment type="subcellular location">
    <subcellularLocation>
        <location evidence="1">Cytoplasm</location>
    </subcellularLocation>
</comment>
<comment type="similarity">
    <text evidence="1">Belongs to the AB hydrolase superfamily. MetX family.</text>
</comment>
<comment type="sequence caution" evidence="2">
    <conflict type="erroneous initiation">
        <sequence resource="EMBL-CDS" id="CAG35972"/>
    </conflict>
</comment>
<sequence length="390" mass="43329">MEKEIKDHKSVGIVEKQFFTCAQVPSPLILENGAKLGPITIAYETYGNLSARKDNAILINHAFSGDSHVAGHYATDGPKEKPGWWDFLVGPGKGIDTDKYFIICSNILGSCNGTTGPASKNSETGEAYALDFPMVTIGDMVATQKLLIDHLGIPKLLAVIGGSVGGMQTLEWAIRYPEMMHSVIPIATTMRHSALAIAFNEIARQAIMTDPHWNRGKYYGQAHPDTGLAVARMVGHVTYLSDEAMRRKFGRNLQEKENLSYGFDADFQVESYLRYQGNKFVHRFDANSLLYITKASDYFDIVERISTSGPETELTAPQQKYLVISYSSDWLYPTYQARDLVKALKRSGRNVSFSEIESDCGHDAFLIPDDRLEQLMRGFLAGIYTGIAEI</sequence>
<reference key="1">
    <citation type="journal article" date="2004" name="Environ. Microbiol.">
        <title>The genome of Desulfotalea psychrophila, a sulfate-reducing bacterium from permanently cold Arctic sediments.</title>
        <authorList>
            <person name="Rabus R."/>
            <person name="Ruepp A."/>
            <person name="Frickey T."/>
            <person name="Rattei T."/>
            <person name="Fartmann B."/>
            <person name="Stark M."/>
            <person name="Bauer M."/>
            <person name="Zibat A."/>
            <person name="Lombardot T."/>
            <person name="Becker I."/>
            <person name="Amann J."/>
            <person name="Gellner K."/>
            <person name="Teeling H."/>
            <person name="Leuschner W.D."/>
            <person name="Gloeckner F.-O."/>
            <person name="Lupas A.N."/>
            <person name="Amann R."/>
            <person name="Klenk H.-P."/>
        </authorList>
    </citation>
    <scope>NUCLEOTIDE SEQUENCE [LARGE SCALE GENOMIC DNA]</scope>
    <source>
        <strain>DSM 12343 / LSv54</strain>
    </source>
</reference>
<feature type="chain" id="PRO_0000155717" description="Homoserine O-acetyltransferase">
    <location>
        <begin position="1"/>
        <end position="390"/>
    </location>
</feature>
<feature type="domain" description="AB hydrolase-1" evidence="1">
    <location>
        <begin position="55"/>
        <end position="366"/>
    </location>
</feature>
<feature type="active site" description="Nucleophile" evidence="1">
    <location>
        <position position="163"/>
    </location>
</feature>
<feature type="active site" evidence="1">
    <location>
        <position position="329"/>
    </location>
</feature>
<feature type="active site" evidence="1">
    <location>
        <position position="362"/>
    </location>
</feature>
<feature type="binding site" evidence="1">
    <location>
        <position position="232"/>
    </location>
    <ligand>
        <name>substrate</name>
    </ligand>
</feature>
<feature type="binding site" evidence="1">
    <location>
        <position position="363"/>
    </location>
    <ligand>
        <name>substrate</name>
    </ligand>
</feature>
<proteinExistence type="inferred from homology"/>
<organism>
    <name type="scientific">Desulfotalea psychrophila (strain LSv54 / DSM 12343)</name>
    <dbReference type="NCBI Taxonomy" id="177439"/>
    <lineage>
        <taxon>Bacteria</taxon>
        <taxon>Pseudomonadati</taxon>
        <taxon>Thermodesulfobacteriota</taxon>
        <taxon>Desulfobulbia</taxon>
        <taxon>Desulfobulbales</taxon>
        <taxon>Desulfocapsaceae</taxon>
        <taxon>Desulfotalea</taxon>
    </lineage>
</organism>
<evidence type="ECO:0000255" key="1">
    <source>
        <dbReference type="HAMAP-Rule" id="MF_00296"/>
    </source>
</evidence>
<evidence type="ECO:0000305" key="2"/>